<gene>
    <name type="primary">MRS2-I</name>
    <name type="ordered locus">Os03g0742400</name>
    <name type="ordered locus">LOC_Os03g53110</name>
    <name type="ORF">OJ1365_D05.9</name>
    <name type="ORF">OsJ_12521</name>
</gene>
<protein>
    <recommendedName>
        <fullName>Magnesium transporter MRS2-I</fullName>
    </recommendedName>
</protein>
<dbReference type="EMBL" id="AC096855">
    <property type="protein sequence ID" value="AAR87307.1"/>
    <property type="status" value="ALT_SEQ"/>
    <property type="molecule type" value="Genomic_DNA"/>
</dbReference>
<dbReference type="EMBL" id="DP000009">
    <property type="protein sequence ID" value="ABF98804.1"/>
    <property type="molecule type" value="Genomic_DNA"/>
</dbReference>
<dbReference type="EMBL" id="AP014959">
    <property type="status" value="NOT_ANNOTATED_CDS"/>
    <property type="molecule type" value="Genomic_DNA"/>
</dbReference>
<dbReference type="EMBL" id="CM000140">
    <property type="protein sequence ID" value="EEE59906.1"/>
    <property type="molecule type" value="Genomic_DNA"/>
</dbReference>
<dbReference type="EMBL" id="AK060249">
    <property type="status" value="NOT_ANNOTATED_CDS"/>
    <property type="molecule type" value="mRNA"/>
</dbReference>
<dbReference type="RefSeq" id="XP_015633129.1">
    <property type="nucleotide sequence ID" value="XM_015777643.1"/>
</dbReference>
<dbReference type="SMR" id="Q10D38"/>
<dbReference type="FunCoup" id="Q10D38">
    <property type="interactions" value="102"/>
</dbReference>
<dbReference type="PaxDb" id="39947-Q10D38"/>
<dbReference type="eggNOG" id="KOG2662">
    <property type="taxonomic scope" value="Eukaryota"/>
</dbReference>
<dbReference type="InParanoid" id="Q10D38"/>
<dbReference type="OrthoDB" id="10251508at2759"/>
<dbReference type="Proteomes" id="UP000000763">
    <property type="component" value="Chromosome 3"/>
</dbReference>
<dbReference type="Proteomes" id="UP000007752">
    <property type="component" value="Chromosome 3"/>
</dbReference>
<dbReference type="Proteomes" id="UP000059680">
    <property type="component" value="Chromosome 3"/>
</dbReference>
<dbReference type="GO" id="GO:0016020">
    <property type="term" value="C:membrane"/>
    <property type="evidence" value="ECO:0007669"/>
    <property type="project" value="UniProtKB-SubCell"/>
</dbReference>
<dbReference type="GO" id="GO:0015095">
    <property type="term" value="F:magnesium ion transmembrane transporter activity"/>
    <property type="evidence" value="ECO:0000318"/>
    <property type="project" value="GO_Central"/>
</dbReference>
<dbReference type="GO" id="GO:0015693">
    <property type="term" value="P:magnesium ion transport"/>
    <property type="evidence" value="ECO:0000318"/>
    <property type="project" value="GO_Central"/>
</dbReference>
<dbReference type="CDD" id="cd12823">
    <property type="entry name" value="Mrs2_Mfm1p-like"/>
    <property type="match status" value="1"/>
</dbReference>
<dbReference type="FunFam" id="2.40.128.330:FF:000001">
    <property type="entry name" value="Magnesium transporter MRS2-1"/>
    <property type="match status" value="1"/>
</dbReference>
<dbReference type="Gene3D" id="2.40.128.330">
    <property type="match status" value="1"/>
</dbReference>
<dbReference type="Gene3D" id="1.20.58.340">
    <property type="entry name" value="Magnesium transport protein CorA, transmembrane region"/>
    <property type="match status" value="1"/>
</dbReference>
<dbReference type="InterPro" id="IPR045863">
    <property type="entry name" value="CorA_TM1_TM2"/>
</dbReference>
<dbReference type="InterPro" id="IPR002523">
    <property type="entry name" value="MgTranspt_CorA/ZnTranspt_ZntB"/>
</dbReference>
<dbReference type="InterPro" id="IPR039204">
    <property type="entry name" value="MRS2-like"/>
</dbReference>
<dbReference type="PANTHER" id="PTHR13890:SF31">
    <property type="entry name" value="MAGNESIUM TRANSPORTER MRS2-2-RELATED"/>
    <property type="match status" value="1"/>
</dbReference>
<dbReference type="PANTHER" id="PTHR13890">
    <property type="entry name" value="RNA SPLICING PROTEIN MRS2, MITOCHONDRIAL"/>
    <property type="match status" value="1"/>
</dbReference>
<dbReference type="Pfam" id="PF01544">
    <property type="entry name" value="CorA"/>
    <property type="match status" value="1"/>
</dbReference>
<dbReference type="Pfam" id="PF22099">
    <property type="entry name" value="MRS2-like"/>
    <property type="match status" value="1"/>
</dbReference>
<dbReference type="SUPFAM" id="SSF144083">
    <property type="entry name" value="Magnesium transport protein CorA, transmembrane region"/>
    <property type="match status" value="1"/>
</dbReference>
<sequence length="384" mass="42189">MAAAVVVAGEAAAAAAAAGAGGKKRGASRSWILFDAAGEERVLDADKYAIMHRVDINARDLRILDPLLSYPSTILGRERAIVLNLEHIKAIITAEEVLLRDPLDDNVIPVVEELRRRLAPSSATQHDVEGAEEDESPFEFRALEVTLEAICSFLGARTTELESAAYPALDELTSKISSRNLDRVRKLKSGMTRLNARVQKVRDELEQLLDDDDDMADLYLSRKLAGAASPVSGSGGPNWFPASPTIGSKISRASRASAPTIHGNENDVEELEMLLEAYFMQIDGTLNKLTTLREYIDDTEDYINIQLDNHRNQLIQLELFLSSGTVCLSLYSLVAGIFGMNIPYTWNDNHGYVFKWVVLVSGLFCAFMFVSIVAYARHKGLVGS</sequence>
<name>MRS2I_ORYSJ</name>
<keyword id="KW-0406">Ion transport</keyword>
<keyword id="KW-0460">Magnesium</keyword>
<keyword id="KW-0472">Membrane</keyword>
<keyword id="KW-1185">Reference proteome</keyword>
<keyword id="KW-0812">Transmembrane</keyword>
<keyword id="KW-1133">Transmembrane helix</keyword>
<keyword id="KW-0813">Transport</keyword>
<proteinExistence type="evidence at transcript level"/>
<organism>
    <name type="scientific">Oryza sativa subsp. japonica</name>
    <name type="common">Rice</name>
    <dbReference type="NCBI Taxonomy" id="39947"/>
    <lineage>
        <taxon>Eukaryota</taxon>
        <taxon>Viridiplantae</taxon>
        <taxon>Streptophyta</taxon>
        <taxon>Embryophyta</taxon>
        <taxon>Tracheophyta</taxon>
        <taxon>Spermatophyta</taxon>
        <taxon>Magnoliopsida</taxon>
        <taxon>Liliopsida</taxon>
        <taxon>Poales</taxon>
        <taxon>Poaceae</taxon>
        <taxon>BOP clade</taxon>
        <taxon>Oryzoideae</taxon>
        <taxon>Oryzeae</taxon>
        <taxon>Oryzinae</taxon>
        <taxon>Oryza</taxon>
        <taxon>Oryza sativa</taxon>
    </lineage>
</organism>
<feature type="chain" id="PRO_0000394281" description="Magnesium transporter MRS2-I">
    <location>
        <begin position="1"/>
        <end position="384"/>
    </location>
</feature>
<feature type="transmembrane region" description="Helical" evidence="2">
    <location>
        <begin position="319"/>
        <end position="339"/>
    </location>
</feature>
<feature type="transmembrane region" description="Helical" evidence="2">
    <location>
        <begin position="356"/>
        <end position="376"/>
    </location>
</feature>
<feature type="short sequence motif" description="Required for magnesium transport activity">
    <location>
        <begin position="339"/>
        <end position="341"/>
    </location>
</feature>
<evidence type="ECO:0000250" key="1"/>
<evidence type="ECO:0000255" key="2"/>
<evidence type="ECO:0000305" key="3"/>
<reference key="1">
    <citation type="journal article" date="2005" name="Genome Res.">
        <title>Sequence, annotation, and analysis of synteny between rice chromosome 3 and diverged grass species.</title>
        <authorList>
            <consortium name="The rice chromosome 3 sequencing consortium"/>
            <person name="Buell C.R."/>
            <person name="Yuan Q."/>
            <person name="Ouyang S."/>
            <person name="Liu J."/>
            <person name="Zhu W."/>
            <person name="Wang A."/>
            <person name="Maiti R."/>
            <person name="Haas B."/>
            <person name="Wortman J."/>
            <person name="Pertea M."/>
            <person name="Jones K.M."/>
            <person name="Kim M."/>
            <person name="Overton L."/>
            <person name="Tsitrin T."/>
            <person name="Fadrosh D."/>
            <person name="Bera J."/>
            <person name="Weaver B."/>
            <person name="Jin S."/>
            <person name="Johri S."/>
            <person name="Reardon M."/>
            <person name="Webb K."/>
            <person name="Hill J."/>
            <person name="Moffat K."/>
            <person name="Tallon L."/>
            <person name="Van Aken S."/>
            <person name="Lewis M."/>
            <person name="Utterback T."/>
            <person name="Feldblyum T."/>
            <person name="Zismann V."/>
            <person name="Iobst S."/>
            <person name="Hsiao J."/>
            <person name="de Vazeille A.R."/>
            <person name="Salzberg S.L."/>
            <person name="White O."/>
            <person name="Fraser C.M."/>
            <person name="Yu Y."/>
            <person name="Kim H."/>
            <person name="Rambo T."/>
            <person name="Currie J."/>
            <person name="Collura K."/>
            <person name="Kernodle-Thompson S."/>
            <person name="Wei F."/>
            <person name="Kudrna K."/>
            <person name="Ammiraju J.S.S."/>
            <person name="Luo M."/>
            <person name="Goicoechea J.L."/>
            <person name="Wing R.A."/>
            <person name="Henry D."/>
            <person name="Oates R."/>
            <person name="Palmer M."/>
            <person name="Pries G."/>
            <person name="Saski C."/>
            <person name="Simmons J."/>
            <person name="Soderlund C."/>
            <person name="Nelson W."/>
            <person name="de la Bastide M."/>
            <person name="Spiegel L."/>
            <person name="Nascimento L."/>
            <person name="Huang E."/>
            <person name="Preston R."/>
            <person name="Zutavern T."/>
            <person name="Palmer L."/>
            <person name="O'Shaughnessy A."/>
            <person name="Dike S."/>
            <person name="McCombie W.R."/>
            <person name="Minx P."/>
            <person name="Cordum H."/>
            <person name="Wilson R."/>
            <person name="Jin W."/>
            <person name="Lee H.R."/>
            <person name="Jiang J."/>
            <person name="Jackson S."/>
        </authorList>
    </citation>
    <scope>NUCLEOTIDE SEQUENCE [LARGE SCALE GENOMIC DNA]</scope>
    <source>
        <strain>cv. Nipponbare</strain>
    </source>
</reference>
<reference key="2">
    <citation type="journal article" date="2005" name="Nature">
        <title>The map-based sequence of the rice genome.</title>
        <authorList>
            <consortium name="International rice genome sequencing project (IRGSP)"/>
        </authorList>
    </citation>
    <scope>NUCLEOTIDE SEQUENCE [LARGE SCALE GENOMIC DNA]</scope>
    <source>
        <strain>cv. Nipponbare</strain>
    </source>
</reference>
<reference key="3">
    <citation type="journal article" date="2013" name="Rice">
        <title>Improvement of the Oryza sativa Nipponbare reference genome using next generation sequence and optical map data.</title>
        <authorList>
            <person name="Kawahara Y."/>
            <person name="de la Bastide M."/>
            <person name="Hamilton J.P."/>
            <person name="Kanamori H."/>
            <person name="McCombie W.R."/>
            <person name="Ouyang S."/>
            <person name="Schwartz D.C."/>
            <person name="Tanaka T."/>
            <person name="Wu J."/>
            <person name="Zhou S."/>
            <person name="Childs K.L."/>
            <person name="Davidson R.M."/>
            <person name="Lin H."/>
            <person name="Quesada-Ocampo L."/>
            <person name="Vaillancourt B."/>
            <person name="Sakai H."/>
            <person name="Lee S.S."/>
            <person name="Kim J."/>
            <person name="Numa H."/>
            <person name="Itoh T."/>
            <person name="Buell C.R."/>
            <person name="Matsumoto T."/>
        </authorList>
    </citation>
    <scope>GENOME REANNOTATION</scope>
    <source>
        <strain>cv. Nipponbare</strain>
    </source>
</reference>
<reference key="4">
    <citation type="journal article" date="2005" name="PLoS Biol.">
        <title>The genomes of Oryza sativa: a history of duplications.</title>
        <authorList>
            <person name="Yu J."/>
            <person name="Wang J."/>
            <person name="Lin W."/>
            <person name="Li S."/>
            <person name="Li H."/>
            <person name="Zhou J."/>
            <person name="Ni P."/>
            <person name="Dong W."/>
            <person name="Hu S."/>
            <person name="Zeng C."/>
            <person name="Zhang J."/>
            <person name="Zhang Y."/>
            <person name="Li R."/>
            <person name="Xu Z."/>
            <person name="Li S."/>
            <person name="Li X."/>
            <person name="Zheng H."/>
            <person name="Cong L."/>
            <person name="Lin L."/>
            <person name="Yin J."/>
            <person name="Geng J."/>
            <person name="Li G."/>
            <person name="Shi J."/>
            <person name="Liu J."/>
            <person name="Lv H."/>
            <person name="Li J."/>
            <person name="Wang J."/>
            <person name="Deng Y."/>
            <person name="Ran L."/>
            <person name="Shi X."/>
            <person name="Wang X."/>
            <person name="Wu Q."/>
            <person name="Li C."/>
            <person name="Ren X."/>
            <person name="Wang J."/>
            <person name="Wang X."/>
            <person name="Li D."/>
            <person name="Liu D."/>
            <person name="Zhang X."/>
            <person name="Ji Z."/>
            <person name="Zhao W."/>
            <person name="Sun Y."/>
            <person name="Zhang Z."/>
            <person name="Bao J."/>
            <person name="Han Y."/>
            <person name="Dong L."/>
            <person name="Ji J."/>
            <person name="Chen P."/>
            <person name="Wu S."/>
            <person name="Liu J."/>
            <person name="Xiao Y."/>
            <person name="Bu D."/>
            <person name="Tan J."/>
            <person name="Yang L."/>
            <person name="Ye C."/>
            <person name="Zhang J."/>
            <person name="Xu J."/>
            <person name="Zhou Y."/>
            <person name="Yu Y."/>
            <person name="Zhang B."/>
            <person name="Zhuang S."/>
            <person name="Wei H."/>
            <person name="Liu B."/>
            <person name="Lei M."/>
            <person name="Yu H."/>
            <person name="Li Y."/>
            <person name="Xu H."/>
            <person name="Wei S."/>
            <person name="He X."/>
            <person name="Fang L."/>
            <person name="Zhang Z."/>
            <person name="Zhang Y."/>
            <person name="Huang X."/>
            <person name="Su Z."/>
            <person name="Tong W."/>
            <person name="Li J."/>
            <person name="Tong Z."/>
            <person name="Li S."/>
            <person name="Ye J."/>
            <person name="Wang L."/>
            <person name="Fang L."/>
            <person name="Lei T."/>
            <person name="Chen C.-S."/>
            <person name="Chen H.-C."/>
            <person name="Xu Z."/>
            <person name="Li H."/>
            <person name="Huang H."/>
            <person name="Zhang F."/>
            <person name="Xu H."/>
            <person name="Li N."/>
            <person name="Zhao C."/>
            <person name="Li S."/>
            <person name="Dong L."/>
            <person name="Huang Y."/>
            <person name="Li L."/>
            <person name="Xi Y."/>
            <person name="Qi Q."/>
            <person name="Li W."/>
            <person name="Zhang B."/>
            <person name="Hu W."/>
            <person name="Zhang Y."/>
            <person name="Tian X."/>
            <person name="Jiao Y."/>
            <person name="Liang X."/>
            <person name="Jin J."/>
            <person name="Gao L."/>
            <person name="Zheng W."/>
            <person name="Hao B."/>
            <person name="Liu S.-M."/>
            <person name="Wang W."/>
            <person name="Yuan L."/>
            <person name="Cao M."/>
            <person name="McDermott J."/>
            <person name="Samudrala R."/>
            <person name="Wang J."/>
            <person name="Wong G.K.-S."/>
            <person name="Yang H."/>
        </authorList>
    </citation>
    <scope>NUCLEOTIDE SEQUENCE [LARGE SCALE GENOMIC DNA]</scope>
    <source>
        <strain>cv. Nipponbare</strain>
    </source>
</reference>
<reference key="5">
    <citation type="journal article" date="2003" name="Science">
        <title>Collection, mapping, and annotation of over 28,000 cDNA clones from japonica rice.</title>
        <authorList>
            <consortium name="The rice full-length cDNA consortium"/>
        </authorList>
    </citation>
    <scope>NUCLEOTIDE SEQUENCE [LARGE SCALE MRNA] OF 136-384</scope>
    <source>
        <strain>cv. Nipponbare</strain>
    </source>
</reference>
<reference key="6">
    <citation type="journal article" date="2009" name="Plant Cell">
        <title>A root-expressed magnesium transporter of the MRS2/MGT gene family in Arabidopsis thaliana allows for growth in low-Mg2+ environments.</title>
        <authorList>
            <person name="Gebert M."/>
            <person name="Meschenmoser K."/>
            <person name="Svidova S."/>
            <person name="Weghuber J."/>
            <person name="Schweyen R."/>
            <person name="Eifler K."/>
            <person name="Lenz H."/>
            <person name="Weyand K."/>
            <person name="Knoop V."/>
        </authorList>
    </citation>
    <scope>GENE FAMILY</scope>
</reference>
<comment type="function">
    <text evidence="1">Magnesium transporter that may mediate the influx of magnesium.</text>
</comment>
<comment type="subcellular location">
    <subcellularLocation>
        <location evidence="1">Membrane</location>
        <topology evidence="1">Multi-pass membrane protein</topology>
    </subcellularLocation>
</comment>
<comment type="similarity">
    <text evidence="3">Belongs to the CorA metal ion transporter (MIT) (TC 1.A.35.5) family.</text>
</comment>
<comment type="sequence caution" evidence="3">
    <conflict type="erroneous gene model prediction">
        <sequence resource="EMBL-CDS" id="AAR87307"/>
    </conflict>
</comment>
<comment type="sequence caution" evidence="3">
    <conflict type="frameshift">
        <sequence resource="EMBL" id="AK060249"/>
    </conflict>
</comment>
<accession>Q10D38</accession>
<accession>Q75KW8</accession>